<feature type="signal peptide" evidence="1">
    <location>
        <begin position="1"/>
        <end position="21"/>
    </location>
</feature>
<feature type="chain" id="PRO_5019816966" description="CUB domain-containing protein" evidence="1">
    <location>
        <begin position="22"/>
        <end position="137"/>
    </location>
</feature>
<feature type="domain" description="CUB" evidence="2">
    <location>
        <begin position="30"/>
        <end position="132"/>
    </location>
</feature>
<feature type="disulfide bond" evidence="2">
    <location>
        <begin position="30"/>
        <end position="51"/>
    </location>
</feature>
<feature type="disulfide bond" evidence="2">
    <location>
        <begin position="75"/>
        <end position="96"/>
    </location>
</feature>
<protein>
    <recommendedName>
        <fullName>CUB domain-containing protein</fullName>
    </recommendedName>
</protein>
<organism>
    <name type="scientific">Homo sapiens</name>
    <name type="common">Human</name>
    <dbReference type="NCBI Taxonomy" id="9606"/>
    <lineage>
        <taxon>Eukaryota</taxon>
        <taxon>Metazoa</taxon>
        <taxon>Chordata</taxon>
        <taxon>Craniata</taxon>
        <taxon>Vertebrata</taxon>
        <taxon>Euteleostomi</taxon>
        <taxon>Mammalia</taxon>
        <taxon>Eutheria</taxon>
        <taxon>Euarchontoglires</taxon>
        <taxon>Primates</taxon>
        <taxon>Haplorrhini</taxon>
        <taxon>Catarrhini</taxon>
        <taxon>Hominidae</taxon>
        <taxon>Homo</taxon>
    </lineage>
</organism>
<accession>A0A494C103</accession>
<gene>
    <name evidence="3" type="primary">SPADH</name>
</gene>
<keyword id="KW-1015">Disulfide bond</keyword>
<keyword id="KW-1267">Proteomics identification</keyword>
<keyword id="KW-1185">Reference proteome</keyword>
<keyword id="KW-0732">Signal</keyword>
<sequence length="137" mass="15323">MRLSRAFAWPLLCSIATTVKAPFATAPSDCGGHYTDEYGRIFNYAGPKTECVWIIELNPGEIVTVAIPDLKGFACGKEYVEVLDGPPGSESLDRICKAFSTFYYSSSNIITIKYSREPSHPPTFFEIYYFVDAWSTH</sequence>
<reference key="1">
    <citation type="journal article" date="2004" name="Nature">
        <title>The DNA sequence and comparative analysis of human chromosome 10.</title>
        <authorList>
            <person name="Deloukas P."/>
            <person name="Earthrowl M.E."/>
            <person name="Grafham D.V."/>
            <person name="Rubenfield M."/>
            <person name="French L."/>
            <person name="Steward C.A."/>
            <person name="Sims S.K."/>
            <person name="Jones M.C."/>
            <person name="Searle S."/>
            <person name="Scott C."/>
            <person name="Howe K."/>
            <person name="Hunt S.E."/>
            <person name="Andrews T.D."/>
            <person name="Gilbert J.G.R."/>
            <person name="Swarbreck D."/>
            <person name="Ashurst J.L."/>
            <person name="Taylor A."/>
            <person name="Battles J."/>
            <person name="Bird C.P."/>
            <person name="Ainscough R."/>
            <person name="Almeida J.P."/>
            <person name="Ashwell R.I.S."/>
            <person name="Ambrose K.D."/>
            <person name="Babbage A.K."/>
            <person name="Bagguley C.L."/>
            <person name="Bailey J."/>
            <person name="Banerjee R."/>
            <person name="Bates K."/>
            <person name="Beasley H."/>
            <person name="Bray-Allen S."/>
            <person name="Brown A.J."/>
            <person name="Brown J.Y."/>
            <person name="Burford D.C."/>
            <person name="Burrill W."/>
            <person name="Burton J."/>
            <person name="Cahill P."/>
            <person name="Camire D."/>
            <person name="Carter N.P."/>
            <person name="Chapman J.C."/>
            <person name="Clark S.Y."/>
            <person name="Clarke G."/>
            <person name="Clee C.M."/>
            <person name="Clegg S."/>
            <person name="Corby N."/>
            <person name="Coulson A."/>
            <person name="Dhami P."/>
            <person name="Dutta I."/>
            <person name="Dunn M."/>
            <person name="Faulkner L."/>
            <person name="Frankish A."/>
            <person name="Frankland J.A."/>
            <person name="Garner P."/>
            <person name="Garnett J."/>
            <person name="Gribble S."/>
            <person name="Griffiths C."/>
            <person name="Grocock R."/>
            <person name="Gustafson E."/>
            <person name="Hammond S."/>
            <person name="Harley J.L."/>
            <person name="Hart E."/>
            <person name="Heath P.D."/>
            <person name="Ho T.P."/>
            <person name="Hopkins B."/>
            <person name="Horne J."/>
            <person name="Howden P.J."/>
            <person name="Huckle E."/>
            <person name="Hynds C."/>
            <person name="Johnson C."/>
            <person name="Johnson D."/>
            <person name="Kana A."/>
            <person name="Kay M."/>
            <person name="Kimberley A.M."/>
            <person name="Kershaw J.K."/>
            <person name="Kokkinaki M."/>
            <person name="Laird G.K."/>
            <person name="Lawlor S."/>
            <person name="Lee H.M."/>
            <person name="Leongamornlert D.A."/>
            <person name="Laird G."/>
            <person name="Lloyd C."/>
            <person name="Lloyd D.M."/>
            <person name="Loveland J."/>
            <person name="Lovell J."/>
            <person name="McLaren S."/>
            <person name="McLay K.E."/>
            <person name="McMurray A."/>
            <person name="Mashreghi-Mohammadi M."/>
            <person name="Matthews L."/>
            <person name="Milne S."/>
            <person name="Nickerson T."/>
            <person name="Nguyen M."/>
            <person name="Overton-Larty E."/>
            <person name="Palmer S.A."/>
            <person name="Pearce A.V."/>
            <person name="Peck A.I."/>
            <person name="Pelan S."/>
            <person name="Phillimore B."/>
            <person name="Porter K."/>
            <person name="Rice C.M."/>
            <person name="Rogosin A."/>
            <person name="Ross M.T."/>
            <person name="Sarafidou T."/>
            <person name="Sehra H.K."/>
            <person name="Shownkeen R."/>
            <person name="Skuce C.D."/>
            <person name="Smith M."/>
            <person name="Standring L."/>
            <person name="Sycamore N."/>
            <person name="Tester J."/>
            <person name="Thorpe A."/>
            <person name="Torcasso W."/>
            <person name="Tracey A."/>
            <person name="Tromans A."/>
            <person name="Tsolas J."/>
            <person name="Wall M."/>
            <person name="Walsh J."/>
            <person name="Wang H."/>
            <person name="Weinstock K."/>
            <person name="West A.P."/>
            <person name="Willey D.L."/>
            <person name="Whitehead S.L."/>
            <person name="Wilming L."/>
            <person name="Wray P.W."/>
            <person name="Young L."/>
            <person name="Chen Y."/>
            <person name="Lovering R.C."/>
            <person name="Moschonas N.K."/>
            <person name="Siebert R."/>
            <person name="Fechtel K."/>
            <person name="Bentley D."/>
            <person name="Durbin R.M."/>
            <person name="Hubbard T."/>
            <person name="Doucette-Stamm L."/>
            <person name="Beck S."/>
            <person name="Smith D.R."/>
            <person name="Rogers J."/>
        </authorList>
    </citation>
    <scope>NUCLEOTIDE SEQUENCE [LARGE SCALE GENOMIC DNA]</scope>
</reference>
<evidence type="ECO:0000255" key="1"/>
<evidence type="ECO:0000255" key="2">
    <source>
        <dbReference type="PROSITE-ProRule" id="PRU00059"/>
    </source>
</evidence>
<evidence type="ECO:0000312" key="3">
    <source>
        <dbReference type="HGNC" id="HGNC:55808"/>
    </source>
</evidence>
<proteinExistence type="evidence at protein level"/>
<dbReference type="EMBL" id="AL603764">
    <property type="status" value="NOT_ANNOTATED_CDS"/>
    <property type="molecule type" value="Genomic_DNA"/>
</dbReference>
<dbReference type="CCDS" id="CCDS91369.1"/>
<dbReference type="RefSeq" id="NP_001351390.1">
    <property type="nucleotide sequence ID" value="NM_001364461.3"/>
</dbReference>
<dbReference type="SMR" id="A0A494C103"/>
<dbReference type="FunCoup" id="A0A494C103">
    <property type="interactions" value="3"/>
</dbReference>
<dbReference type="STRING" id="9606.ENSP00000498797"/>
<dbReference type="MassIVE" id="A0A494C103"/>
<dbReference type="PeptideAtlas" id="A0A494C103"/>
<dbReference type="Ensembl" id="ENST00000652090.1">
    <property type="protein sequence ID" value="ENSP00000498797.1"/>
    <property type="gene ID" value="ENSG00000286135.1"/>
</dbReference>
<dbReference type="GeneID" id="112577516"/>
<dbReference type="MANE-Select" id="ENST00000652090.1">
    <property type="protein sequence ID" value="ENSP00000498797.1"/>
    <property type="RefSeq nucleotide sequence ID" value="NM_001364461.3"/>
    <property type="RefSeq protein sequence ID" value="NP_001351390.1"/>
</dbReference>
<dbReference type="AGR" id="HGNC:55808"/>
<dbReference type="GeneCards" id="SPADH"/>
<dbReference type="HGNC" id="HGNC:55808">
    <property type="gene designation" value="SPADH"/>
</dbReference>
<dbReference type="VEuPathDB" id="HostDB:ENSG00000286135"/>
<dbReference type="GeneTree" id="ENSGT00390000012112"/>
<dbReference type="InParanoid" id="A0A494C103"/>
<dbReference type="OMA" id="CGGHYTD"/>
<dbReference type="OrthoDB" id="9517200at2759"/>
<dbReference type="PRO" id="PR:A0A494C103"/>
<dbReference type="Proteomes" id="UP000005640">
    <property type="component" value="Chromosome 10"/>
</dbReference>
<dbReference type="Bgee" id="ENSG00000286135">
    <property type="expression patterns" value="Expressed in colonic epithelium and 10 other cell types or tissues"/>
</dbReference>
<dbReference type="CDD" id="cd00041">
    <property type="entry name" value="CUB"/>
    <property type="match status" value="1"/>
</dbReference>
<dbReference type="Gene3D" id="2.60.120.290">
    <property type="entry name" value="Spermadhesin, CUB domain"/>
    <property type="match status" value="1"/>
</dbReference>
<dbReference type="InterPro" id="IPR000859">
    <property type="entry name" value="CUB_dom"/>
</dbReference>
<dbReference type="InterPro" id="IPR035914">
    <property type="entry name" value="Sperma_CUB_dom_sf"/>
</dbReference>
<dbReference type="Pfam" id="PF00431">
    <property type="entry name" value="CUB"/>
    <property type="match status" value="1"/>
</dbReference>
<dbReference type="SMART" id="SM00042">
    <property type="entry name" value="CUB"/>
    <property type="match status" value="1"/>
</dbReference>
<dbReference type="SUPFAM" id="SSF49854">
    <property type="entry name" value="Spermadhesin, CUB domain"/>
    <property type="match status" value="1"/>
</dbReference>
<dbReference type="PROSITE" id="PS01180">
    <property type="entry name" value="CUB"/>
    <property type="match status" value="1"/>
</dbReference>
<name>SPADH_HUMAN</name>